<gene>
    <name evidence="1" type="primary">nuoD</name>
    <name type="ordered locus">Mmar10_1358</name>
</gene>
<accession>Q0APY7</accession>
<sequence>MADDMTQATEAPRNFTINFGPQHPAAHGVLRLVLELDGEVVERVDPHIGLLHRGTEKLLEHKTYLQGIGYFDRLDYVAPMNQEHAFCMAAEKLAGITVPKRGEYVRVLYCEIGRVLNHLLNVTTQAMDVGALTPPLWGFEEREKLMVFYERASGSRMHAHYFRPGGVHQDLPMKLVEDIRAWCDQFPAKLDDIDSLLTENRIFKQRNVDIGVVTKEDVLAWGFSGVMVRGSGLAWDLRRSQPYSVYDELKFDIPVGKNGDCYDRYLCRMEEMRESVKIMIQCCDWLMKDENAGEVLATDSKFSPPRRAEMKRSMEALIQHFKLYTEGVHVEEGETYVAVEAPKGEFGVYLVSDGSNKPYRLKIRAPGFAHLAAMDYMSKGHMLADVSAIIGSLDVVFGEIDR</sequence>
<name>NUOD_MARMM</name>
<feature type="chain" id="PRO_0000357843" description="NADH-quinone oxidoreductase subunit D">
    <location>
        <begin position="1"/>
        <end position="402"/>
    </location>
</feature>
<protein>
    <recommendedName>
        <fullName evidence="1">NADH-quinone oxidoreductase subunit D</fullName>
        <ecNumber evidence="1">7.1.1.-</ecNumber>
    </recommendedName>
    <alternativeName>
        <fullName evidence="1">NADH dehydrogenase I subunit D</fullName>
    </alternativeName>
    <alternativeName>
        <fullName evidence="1">NDH-1 subunit D</fullName>
    </alternativeName>
</protein>
<comment type="function">
    <text evidence="1">NDH-1 shuttles electrons from NADH, via FMN and iron-sulfur (Fe-S) centers, to quinones in the respiratory chain. The immediate electron acceptor for the enzyme in this species is believed to be ubiquinone. Couples the redox reaction to proton translocation (for every two electrons transferred, four hydrogen ions are translocated across the cytoplasmic membrane), and thus conserves the redox energy in a proton gradient.</text>
</comment>
<comment type="catalytic activity">
    <reaction evidence="1">
        <text>a quinone + NADH + 5 H(+)(in) = a quinol + NAD(+) + 4 H(+)(out)</text>
        <dbReference type="Rhea" id="RHEA:57888"/>
        <dbReference type="ChEBI" id="CHEBI:15378"/>
        <dbReference type="ChEBI" id="CHEBI:24646"/>
        <dbReference type="ChEBI" id="CHEBI:57540"/>
        <dbReference type="ChEBI" id="CHEBI:57945"/>
        <dbReference type="ChEBI" id="CHEBI:132124"/>
    </reaction>
</comment>
<comment type="subunit">
    <text evidence="1">NDH-1 is composed of 14 different subunits. Subunits NuoB, C, D, E, F, and G constitute the peripheral sector of the complex.</text>
</comment>
<comment type="subcellular location">
    <subcellularLocation>
        <location evidence="1">Cell inner membrane</location>
        <topology evidence="1">Peripheral membrane protein</topology>
        <orientation evidence="1">Cytoplasmic side</orientation>
    </subcellularLocation>
</comment>
<comment type="similarity">
    <text evidence="1">Belongs to the complex I 49 kDa subunit family.</text>
</comment>
<reference key="1">
    <citation type="submission" date="2006-08" db="EMBL/GenBank/DDBJ databases">
        <title>Complete sequence of Maricaulis maris MCS10.</title>
        <authorList>
            <consortium name="US DOE Joint Genome Institute"/>
            <person name="Copeland A."/>
            <person name="Lucas S."/>
            <person name="Lapidus A."/>
            <person name="Barry K."/>
            <person name="Detter J.C."/>
            <person name="Glavina del Rio T."/>
            <person name="Hammon N."/>
            <person name="Israni S."/>
            <person name="Dalin E."/>
            <person name="Tice H."/>
            <person name="Pitluck S."/>
            <person name="Saunders E."/>
            <person name="Brettin T."/>
            <person name="Bruce D."/>
            <person name="Han C."/>
            <person name="Tapia R."/>
            <person name="Gilna P."/>
            <person name="Schmutz J."/>
            <person name="Larimer F."/>
            <person name="Land M."/>
            <person name="Hauser L."/>
            <person name="Kyrpides N."/>
            <person name="Mikhailova N."/>
            <person name="Viollier P."/>
            <person name="Stephens C."/>
            <person name="Richardson P."/>
        </authorList>
    </citation>
    <scope>NUCLEOTIDE SEQUENCE [LARGE SCALE GENOMIC DNA]</scope>
    <source>
        <strain>MCS10</strain>
    </source>
</reference>
<dbReference type="EC" id="7.1.1.-" evidence="1"/>
<dbReference type="EMBL" id="CP000449">
    <property type="protein sequence ID" value="ABI65650.1"/>
    <property type="molecule type" value="Genomic_DNA"/>
</dbReference>
<dbReference type="RefSeq" id="WP_011643297.1">
    <property type="nucleotide sequence ID" value="NC_008347.1"/>
</dbReference>
<dbReference type="SMR" id="Q0APY7"/>
<dbReference type="STRING" id="394221.Mmar10_1358"/>
<dbReference type="KEGG" id="mmr:Mmar10_1358"/>
<dbReference type="eggNOG" id="COG0649">
    <property type="taxonomic scope" value="Bacteria"/>
</dbReference>
<dbReference type="HOGENOM" id="CLU_015134_1_1_5"/>
<dbReference type="Proteomes" id="UP000001964">
    <property type="component" value="Chromosome"/>
</dbReference>
<dbReference type="GO" id="GO:0005886">
    <property type="term" value="C:plasma membrane"/>
    <property type="evidence" value="ECO:0007669"/>
    <property type="project" value="UniProtKB-SubCell"/>
</dbReference>
<dbReference type="GO" id="GO:0051287">
    <property type="term" value="F:NAD binding"/>
    <property type="evidence" value="ECO:0007669"/>
    <property type="project" value="InterPro"/>
</dbReference>
<dbReference type="GO" id="GO:0050136">
    <property type="term" value="F:NADH:ubiquinone reductase (non-electrogenic) activity"/>
    <property type="evidence" value="ECO:0007669"/>
    <property type="project" value="UniProtKB-UniRule"/>
</dbReference>
<dbReference type="GO" id="GO:0048038">
    <property type="term" value="F:quinone binding"/>
    <property type="evidence" value="ECO:0007669"/>
    <property type="project" value="UniProtKB-KW"/>
</dbReference>
<dbReference type="FunFam" id="1.10.645.10:FF:000005">
    <property type="entry name" value="NADH-quinone oxidoreductase subunit D"/>
    <property type="match status" value="1"/>
</dbReference>
<dbReference type="Gene3D" id="1.10.645.10">
    <property type="entry name" value="Cytochrome-c3 Hydrogenase, chain B"/>
    <property type="match status" value="1"/>
</dbReference>
<dbReference type="HAMAP" id="MF_01358">
    <property type="entry name" value="NDH1_NuoD"/>
    <property type="match status" value="1"/>
</dbReference>
<dbReference type="InterPro" id="IPR001135">
    <property type="entry name" value="NADH_Q_OxRdtase_suD"/>
</dbReference>
<dbReference type="InterPro" id="IPR014029">
    <property type="entry name" value="NADH_UbQ_OxRdtase_49kDa_CS"/>
</dbReference>
<dbReference type="InterPro" id="IPR022885">
    <property type="entry name" value="NDH1_su_D/H"/>
</dbReference>
<dbReference type="InterPro" id="IPR029014">
    <property type="entry name" value="NiFe-Hase_large"/>
</dbReference>
<dbReference type="NCBIfam" id="TIGR01962">
    <property type="entry name" value="NuoD"/>
    <property type="match status" value="1"/>
</dbReference>
<dbReference type="NCBIfam" id="NF004739">
    <property type="entry name" value="PRK06075.1"/>
    <property type="match status" value="1"/>
</dbReference>
<dbReference type="PANTHER" id="PTHR11993:SF10">
    <property type="entry name" value="NADH DEHYDROGENASE [UBIQUINONE] IRON-SULFUR PROTEIN 2, MITOCHONDRIAL"/>
    <property type="match status" value="1"/>
</dbReference>
<dbReference type="PANTHER" id="PTHR11993">
    <property type="entry name" value="NADH-UBIQUINONE OXIDOREDUCTASE 49 KDA SUBUNIT"/>
    <property type="match status" value="1"/>
</dbReference>
<dbReference type="Pfam" id="PF00346">
    <property type="entry name" value="Complex1_49kDa"/>
    <property type="match status" value="1"/>
</dbReference>
<dbReference type="SUPFAM" id="SSF56762">
    <property type="entry name" value="HydB/Nqo4-like"/>
    <property type="match status" value="1"/>
</dbReference>
<dbReference type="PROSITE" id="PS00535">
    <property type="entry name" value="COMPLEX1_49K"/>
    <property type="match status" value="1"/>
</dbReference>
<keyword id="KW-0997">Cell inner membrane</keyword>
<keyword id="KW-1003">Cell membrane</keyword>
<keyword id="KW-0472">Membrane</keyword>
<keyword id="KW-0520">NAD</keyword>
<keyword id="KW-0874">Quinone</keyword>
<keyword id="KW-1185">Reference proteome</keyword>
<keyword id="KW-1278">Translocase</keyword>
<keyword id="KW-0813">Transport</keyword>
<keyword id="KW-0830">Ubiquinone</keyword>
<evidence type="ECO:0000255" key="1">
    <source>
        <dbReference type="HAMAP-Rule" id="MF_01358"/>
    </source>
</evidence>
<organism>
    <name type="scientific">Maricaulis maris (strain MCS10)</name>
    <name type="common">Caulobacter maris</name>
    <dbReference type="NCBI Taxonomy" id="394221"/>
    <lineage>
        <taxon>Bacteria</taxon>
        <taxon>Pseudomonadati</taxon>
        <taxon>Pseudomonadota</taxon>
        <taxon>Alphaproteobacteria</taxon>
        <taxon>Maricaulales</taxon>
        <taxon>Maricaulaceae</taxon>
        <taxon>Maricaulis</taxon>
    </lineage>
</organism>
<proteinExistence type="inferred from homology"/>